<accession>Q44009</accession>
<accession>O07951</accession>
<comment type="function">
    <text>Component of the czc cation-efflux system that confers resistance to cobalt, zinc and cadmium. May have a regulatory function.</text>
</comment>
<comment type="subcellular location">
    <subcellularLocation>
        <location evidence="4">Periplasm</location>
    </subcellularLocation>
</comment>
<comment type="induction">
    <text evidence="3">By zinc, cobalt and cadmium (zinc being the best and cadmium being the worst inducer).</text>
</comment>
<protein>
    <recommendedName>
        <fullName>Cobalt-zinc-cadmium resistance protein CzcI</fullName>
    </recommendedName>
    <alternativeName>
        <fullName>Cation efflux system protein CzcI</fullName>
    </alternativeName>
</protein>
<geneLocation type="plasmid">
    <name>pMOL30</name>
</geneLocation>
<name>CZCI_CUPMC</name>
<keyword id="KW-0105">Cadmium resistance</keyword>
<keyword id="KW-0170">Cobalt</keyword>
<keyword id="KW-0574">Periplasm</keyword>
<keyword id="KW-0614">Plasmid</keyword>
<keyword id="KW-1185">Reference proteome</keyword>
<keyword id="KW-0732">Signal</keyword>
<keyword id="KW-0862">Zinc</keyword>
<gene>
    <name type="primary">czcI</name>
    <name type="ordered locus">Rmet_5983.1</name>
</gene>
<sequence length="115" mass="13266">MRRFVLIFVLLILPFQFSWAAAARYCQHEKATATWHLGHHEHRHQQPEGKTDAEKKPFVDTDCGVCHLVSLPFVYGQTQDVLIANRVEVTDTQHSSEFSSLNARAPDRPQWQRLA</sequence>
<proteinExistence type="evidence at transcript level"/>
<organism>
    <name type="scientific">Cupriavidus metallidurans (strain ATCC 43123 / DSM 2839 / NBRC 102507 / CH34)</name>
    <name type="common">Ralstonia metallidurans</name>
    <dbReference type="NCBI Taxonomy" id="266264"/>
    <lineage>
        <taxon>Bacteria</taxon>
        <taxon>Pseudomonadati</taxon>
        <taxon>Pseudomonadota</taxon>
        <taxon>Betaproteobacteria</taxon>
        <taxon>Burkholderiales</taxon>
        <taxon>Burkholderiaceae</taxon>
        <taxon>Cupriavidus</taxon>
    </lineage>
</organism>
<dbReference type="EMBL" id="X71400">
    <property type="protein sequence ID" value="CAA50524.1"/>
    <property type="molecule type" value="Genomic_DNA"/>
</dbReference>
<dbReference type="EMBL" id="X98451">
    <property type="protein sequence ID" value="CAA67081.1"/>
    <property type="molecule type" value="Genomic_DNA"/>
</dbReference>
<dbReference type="EMBL" id="CP000354">
    <property type="status" value="NOT_ANNOTATED_CDS"/>
    <property type="molecule type" value="Genomic_DNA"/>
</dbReference>
<dbReference type="RefSeq" id="WP_011229345.1">
    <property type="nucleotide sequence ID" value="NC_007971.2"/>
</dbReference>
<dbReference type="RefSeq" id="YP_145592.1">
    <property type="nucleotide sequence ID" value="NC_006466.1"/>
</dbReference>
<dbReference type="GeneID" id="98407037"/>
<dbReference type="Proteomes" id="UP000002429">
    <property type="component" value="Plasmid pMOL30"/>
</dbReference>
<dbReference type="GO" id="GO:0042597">
    <property type="term" value="C:periplasmic space"/>
    <property type="evidence" value="ECO:0007669"/>
    <property type="project" value="UniProtKB-SubCell"/>
</dbReference>
<dbReference type="GO" id="GO:0046686">
    <property type="term" value="P:response to cadmium ion"/>
    <property type="evidence" value="ECO:0007669"/>
    <property type="project" value="UniProtKB-KW"/>
</dbReference>
<dbReference type="InterPro" id="IPR055013">
    <property type="entry name" value="CzcI"/>
</dbReference>
<dbReference type="NCBIfam" id="NF045614">
    <property type="entry name" value="efflu_CzcI_Cupr"/>
    <property type="match status" value="1"/>
</dbReference>
<reference key="1">
    <citation type="journal article" date="1992" name="J. Bacteriol.">
        <title>CzcR and CzcD, gene products affecting regulation of resistance to cobalt, zinc, and cadmium (czc system) in Alcaligenes eutrophus.</title>
        <authorList>
            <person name="Nies D.H."/>
        </authorList>
    </citation>
    <scope>NUCLEOTIDE SEQUENCE [GENOMIC DNA]</scope>
</reference>
<reference key="2">
    <citation type="journal article" date="1995" name="J. Ind. Microbiol.">
        <title>The czc operon of Alcaligenes eutrophus CH34: from resistance mechanism to the removal of heavy metals.</title>
        <authorList>
            <person name="Diels L."/>
            <person name="Dong Q."/>
            <person name="van der Lelie D."/>
            <person name="Baeyens W."/>
            <person name="Mergeay M."/>
        </authorList>
    </citation>
    <scope>NUCLEOTIDE SEQUENCE [GENOMIC DNA]</scope>
    <scope>IDENTIFICATION</scope>
    <scope>INDUCTION</scope>
    <scope>DISCUSSION OF FUNCTION</scope>
</reference>
<reference key="3">
    <citation type="journal article" date="2010" name="PLoS ONE">
        <title>The complete genome sequence of Cupriavidus metallidurans strain CH34, a master survivalist in harsh and anthropogenic environments.</title>
        <authorList>
            <person name="Janssen P.J."/>
            <person name="Van Houdt R."/>
            <person name="Moors H."/>
            <person name="Monsieurs P."/>
            <person name="Morin N."/>
            <person name="Michaux A."/>
            <person name="Benotmane M.A."/>
            <person name="Leys N."/>
            <person name="Vallaeys T."/>
            <person name="Lapidus A."/>
            <person name="Monchy S."/>
            <person name="Medigue C."/>
            <person name="Taghavi S."/>
            <person name="McCorkle S."/>
            <person name="Dunn J."/>
            <person name="van der Lelie D."/>
            <person name="Mergeay M."/>
        </authorList>
    </citation>
    <scope>NUCLEOTIDE SEQUENCE [LARGE SCALE GENOMIC DNA]</scope>
    <source>
        <strain>ATCC 43123 / DSM 2839 / NBRC 102507 / CH34</strain>
    </source>
</reference>
<evidence type="ECO:0000255" key="1"/>
<evidence type="ECO:0000256" key="2">
    <source>
        <dbReference type="SAM" id="MobiDB-lite"/>
    </source>
</evidence>
<evidence type="ECO:0000269" key="3">
    <source>
    </source>
</evidence>
<evidence type="ECO:0000305" key="4"/>
<feature type="signal peptide" evidence="1">
    <location>
        <begin position="1"/>
        <end position="20"/>
    </location>
</feature>
<feature type="chain" id="PRO_0000021057" description="Cobalt-zinc-cadmium resistance protein CzcI">
    <location>
        <begin position="21"/>
        <end position="115"/>
    </location>
</feature>
<feature type="region of interest" description="Disordered" evidence="2">
    <location>
        <begin position="93"/>
        <end position="115"/>
    </location>
</feature>
<feature type="compositionally biased region" description="Polar residues" evidence="2">
    <location>
        <begin position="93"/>
        <end position="102"/>
    </location>
</feature>